<keyword id="KW-0012">Acyltransferase</keyword>
<keyword id="KW-0963">Cytoplasm</keyword>
<keyword id="KW-0408">Iron</keyword>
<keyword id="KW-0479">Metal-binding</keyword>
<keyword id="KW-0808">Transferase</keyword>
<keyword id="KW-0819">tRNA processing</keyword>
<proteinExistence type="inferred from homology"/>
<organism>
    <name type="scientific">Dechloromonas aromatica (strain RCB)</name>
    <dbReference type="NCBI Taxonomy" id="159087"/>
    <lineage>
        <taxon>Bacteria</taxon>
        <taxon>Pseudomonadati</taxon>
        <taxon>Pseudomonadota</taxon>
        <taxon>Betaproteobacteria</taxon>
        <taxon>Rhodocyclales</taxon>
        <taxon>Azonexaceae</taxon>
        <taxon>Dechloromonas</taxon>
    </lineage>
</organism>
<gene>
    <name evidence="1" type="primary">tsaD</name>
    <name type="synonym">gcp</name>
    <name type="ordered locus">Daro_0530</name>
</gene>
<accession>Q47IP4</accession>
<reference key="1">
    <citation type="journal article" date="2009" name="BMC Genomics">
        <title>Metabolic analysis of the soil microbe Dechloromonas aromatica str. RCB: indications of a surprisingly complex life-style and cryptic anaerobic pathways for aromatic degradation.</title>
        <authorList>
            <person name="Salinero K.K."/>
            <person name="Keller K."/>
            <person name="Feil W.S."/>
            <person name="Feil H."/>
            <person name="Trong S."/>
            <person name="Di Bartolo G."/>
            <person name="Lapidus A."/>
        </authorList>
    </citation>
    <scope>NUCLEOTIDE SEQUENCE [LARGE SCALE GENOMIC DNA]</scope>
    <source>
        <strain>RCB</strain>
    </source>
</reference>
<protein>
    <recommendedName>
        <fullName evidence="1">tRNA N6-adenosine threonylcarbamoyltransferase</fullName>
        <ecNumber evidence="1">2.3.1.234</ecNumber>
    </recommendedName>
    <alternativeName>
        <fullName evidence="1">N6-L-threonylcarbamoyladenine synthase</fullName>
        <shortName evidence="1">t(6)A synthase</shortName>
    </alternativeName>
    <alternativeName>
        <fullName evidence="1">t(6)A37 threonylcarbamoyladenosine biosynthesis protein TsaD</fullName>
    </alternativeName>
    <alternativeName>
        <fullName evidence="1">tRNA threonylcarbamoyladenosine biosynthesis protein TsaD</fullName>
    </alternativeName>
</protein>
<sequence>MLILGVESSCDETGIALYDSEAGLLSHALYSQVAMHAEYGGVVPELASRDHIRRVVPLLREALGQAGKMLDEVDAVAYTRGPGLAGALLVGCAFAEALALAIDKPTIPVHHLEGHLLSPLLSSDPPTFPFVALLVSGGHTQLMKVTGVGEYELLGETLDDAAGEAFDKSAKLLGLPYPGGALLSKLAEQGTPGVHELPRPMLHSGDLSFSFSGLKTAVLTLVREHADAMSDEFKANAARAFQEAIVEVLVKKSLKAMKQTGLKQLVVAGGVGANKQLRTTLNDEAKRKRFRVYYPELEFCTDNGAMIALAGCLRLQSGSPSKAAGSFAVQPRWPLMEMSVSPTK</sequence>
<name>TSAD_DECAR</name>
<feature type="chain" id="PRO_0000303342" description="tRNA N6-adenosine threonylcarbamoyltransferase">
    <location>
        <begin position="1"/>
        <end position="344"/>
    </location>
</feature>
<feature type="binding site" evidence="1">
    <location>
        <position position="111"/>
    </location>
    <ligand>
        <name>Fe cation</name>
        <dbReference type="ChEBI" id="CHEBI:24875"/>
    </ligand>
</feature>
<feature type="binding site" evidence="1">
    <location>
        <position position="115"/>
    </location>
    <ligand>
        <name>Fe cation</name>
        <dbReference type="ChEBI" id="CHEBI:24875"/>
    </ligand>
</feature>
<feature type="binding site" evidence="1">
    <location>
        <begin position="134"/>
        <end position="138"/>
    </location>
    <ligand>
        <name>substrate</name>
    </ligand>
</feature>
<feature type="binding site" evidence="1">
    <location>
        <position position="167"/>
    </location>
    <ligand>
        <name>substrate</name>
    </ligand>
</feature>
<feature type="binding site" evidence="1">
    <location>
        <position position="180"/>
    </location>
    <ligand>
        <name>substrate</name>
    </ligand>
</feature>
<feature type="binding site" evidence="1">
    <location>
        <position position="274"/>
    </location>
    <ligand>
        <name>substrate</name>
    </ligand>
</feature>
<feature type="binding site" evidence="1">
    <location>
        <position position="302"/>
    </location>
    <ligand>
        <name>Fe cation</name>
        <dbReference type="ChEBI" id="CHEBI:24875"/>
    </ligand>
</feature>
<comment type="function">
    <text evidence="1">Required for the formation of a threonylcarbamoyl group on adenosine at position 37 (t(6)A37) in tRNAs that read codons beginning with adenine. Is involved in the transfer of the threonylcarbamoyl moiety of threonylcarbamoyl-AMP (TC-AMP) to the N6 group of A37, together with TsaE and TsaB. TsaD likely plays a direct catalytic role in this reaction.</text>
</comment>
<comment type="catalytic activity">
    <reaction evidence="1">
        <text>L-threonylcarbamoyladenylate + adenosine(37) in tRNA = N(6)-L-threonylcarbamoyladenosine(37) in tRNA + AMP + H(+)</text>
        <dbReference type="Rhea" id="RHEA:37059"/>
        <dbReference type="Rhea" id="RHEA-COMP:10162"/>
        <dbReference type="Rhea" id="RHEA-COMP:10163"/>
        <dbReference type="ChEBI" id="CHEBI:15378"/>
        <dbReference type="ChEBI" id="CHEBI:73682"/>
        <dbReference type="ChEBI" id="CHEBI:74411"/>
        <dbReference type="ChEBI" id="CHEBI:74418"/>
        <dbReference type="ChEBI" id="CHEBI:456215"/>
        <dbReference type="EC" id="2.3.1.234"/>
    </reaction>
</comment>
<comment type="cofactor">
    <cofactor evidence="1">
        <name>Fe(2+)</name>
        <dbReference type="ChEBI" id="CHEBI:29033"/>
    </cofactor>
    <text evidence="1">Binds 1 Fe(2+) ion per subunit.</text>
</comment>
<comment type="subcellular location">
    <subcellularLocation>
        <location evidence="1">Cytoplasm</location>
    </subcellularLocation>
</comment>
<comment type="similarity">
    <text evidence="1">Belongs to the KAE1 / TsaD family.</text>
</comment>
<comment type="sequence caution" evidence="2">
    <conflict type="erroneous initiation">
        <sequence resource="EMBL-CDS" id="AAZ45287"/>
    </conflict>
</comment>
<evidence type="ECO:0000255" key="1">
    <source>
        <dbReference type="HAMAP-Rule" id="MF_01445"/>
    </source>
</evidence>
<evidence type="ECO:0000305" key="2"/>
<dbReference type="EC" id="2.3.1.234" evidence="1"/>
<dbReference type="EMBL" id="CP000089">
    <property type="protein sequence ID" value="AAZ45287.1"/>
    <property type="status" value="ALT_INIT"/>
    <property type="molecule type" value="Genomic_DNA"/>
</dbReference>
<dbReference type="SMR" id="Q47IP4"/>
<dbReference type="STRING" id="159087.Daro_0530"/>
<dbReference type="KEGG" id="dar:Daro_0530"/>
<dbReference type="eggNOG" id="COG0533">
    <property type="taxonomic scope" value="Bacteria"/>
</dbReference>
<dbReference type="HOGENOM" id="CLU_023208_0_2_4"/>
<dbReference type="OrthoDB" id="9806197at2"/>
<dbReference type="GO" id="GO:0005737">
    <property type="term" value="C:cytoplasm"/>
    <property type="evidence" value="ECO:0007669"/>
    <property type="project" value="UniProtKB-SubCell"/>
</dbReference>
<dbReference type="GO" id="GO:0005506">
    <property type="term" value="F:iron ion binding"/>
    <property type="evidence" value="ECO:0007669"/>
    <property type="project" value="UniProtKB-UniRule"/>
</dbReference>
<dbReference type="GO" id="GO:0061711">
    <property type="term" value="F:N(6)-L-threonylcarbamoyladenine synthase activity"/>
    <property type="evidence" value="ECO:0007669"/>
    <property type="project" value="UniProtKB-EC"/>
</dbReference>
<dbReference type="GO" id="GO:0002949">
    <property type="term" value="P:tRNA threonylcarbamoyladenosine modification"/>
    <property type="evidence" value="ECO:0007669"/>
    <property type="project" value="UniProtKB-UniRule"/>
</dbReference>
<dbReference type="CDD" id="cd24133">
    <property type="entry name" value="ASKHA_NBD_TsaD_bac"/>
    <property type="match status" value="1"/>
</dbReference>
<dbReference type="FunFam" id="3.30.420.40:FF:000012">
    <property type="entry name" value="tRNA N6-adenosine threonylcarbamoyltransferase"/>
    <property type="match status" value="1"/>
</dbReference>
<dbReference type="FunFam" id="3.30.420.40:FF:000040">
    <property type="entry name" value="tRNA N6-adenosine threonylcarbamoyltransferase"/>
    <property type="match status" value="1"/>
</dbReference>
<dbReference type="Gene3D" id="3.30.420.40">
    <property type="match status" value="2"/>
</dbReference>
<dbReference type="HAMAP" id="MF_01445">
    <property type="entry name" value="TsaD"/>
    <property type="match status" value="1"/>
</dbReference>
<dbReference type="InterPro" id="IPR043129">
    <property type="entry name" value="ATPase_NBD"/>
</dbReference>
<dbReference type="InterPro" id="IPR000905">
    <property type="entry name" value="Gcp-like_dom"/>
</dbReference>
<dbReference type="InterPro" id="IPR017861">
    <property type="entry name" value="KAE1/TsaD"/>
</dbReference>
<dbReference type="InterPro" id="IPR022450">
    <property type="entry name" value="TsaD"/>
</dbReference>
<dbReference type="NCBIfam" id="TIGR00329">
    <property type="entry name" value="gcp_kae1"/>
    <property type="match status" value="1"/>
</dbReference>
<dbReference type="NCBIfam" id="TIGR03723">
    <property type="entry name" value="T6A_TsaD_YgjD"/>
    <property type="match status" value="1"/>
</dbReference>
<dbReference type="PANTHER" id="PTHR11735">
    <property type="entry name" value="TRNA N6-ADENOSINE THREONYLCARBAMOYLTRANSFERASE"/>
    <property type="match status" value="1"/>
</dbReference>
<dbReference type="PANTHER" id="PTHR11735:SF6">
    <property type="entry name" value="TRNA N6-ADENOSINE THREONYLCARBAMOYLTRANSFERASE, MITOCHONDRIAL"/>
    <property type="match status" value="1"/>
</dbReference>
<dbReference type="Pfam" id="PF00814">
    <property type="entry name" value="TsaD"/>
    <property type="match status" value="1"/>
</dbReference>
<dbReference type="PRINTS" id="PR00789">
    <property type="entry name" value="OSIALOPTASE"/>
</dbReference>
<dbReference type="SUPFAM" id="SSF53067">
    <property type="entry name" value="Actin-like ATPase domain"/>
    <property type="match status" value="2"/>
</dbReference>